<feature type="chain" id="PRO_1000095473" description="ATP phosphoribosyltransferase regulatory subunit">
    <location>
        <begin position="1"/>
        <end position="380"/>
    </location>
</feature>
<keyword id="KW-0028">Amino-acid biosynthesis</keyword>
<keyword id="KW-0963">Cytoplasm</keyword>
<keyword id="KW-0368">Histidine biosynthesis</keyword>
<keyword id="KW-1185">Reference proteome</keyword>
<sequence length="380" mass="44121">MIYLPDGVQDFLPEEYKFKRKIEEKFREVFIKFGYQEIMPPTFEYSDNFSVLFDENNLYRFFDKKGNILALRPDVTTQIARIVSTKLKGSFPLKLCYVANVYRYDDPQVGKMREFTQAGIELIGTNHEESDAEIIAVAIEALKSVGIKDFKVDVGQVEFFKRVVEDLELQNEEINLLREFLQQKNQSAIEEFINDKGIRGKKAKFLSELPLLFGGEEVLKRAKELYDTPKLGETIDYLERVYRILKDFGMEEYISFDLGMVQNLNYYTGIIFRCFVKGIGYAICTGGRYDGLLGIFGEHIPATGFAISVERSMLALQKQKKDIIDKSWRVLIKYKENLRSNAYKKATLLRGEGKIVEMYSYEKAKHVDENSFDEIIDMEE</sequence>
<protein>
    <recommendedName>
        <fullName evidence="1">ATP phosphoribosyltransferase regulatory subunit</fullName>
    </recommendedName>
</protein>
<dbReference type="EMBL" id="CP000924">
    <property type="protein sequence ID" value="ABY94179.1"/>
    <property type="molecule type" value="Genomic_DNA"/>
</dbReference>
<dbReference type="RefSeq" id="WP_012269040.1">
    <property type="nucleotide sequence ID" value="NC_010321.1"/>
</dbReference>
<dbReference type="SMR" id="B0K732"/>
<dbReference type="STRING" id="340099.Teth39_0514"/>
<dbReference type="KEGG" id="tpd:Teth39_0514"/>
<dbReference type="eggNOG" id="COG3705">
    <property type="taxonomic scope" value="Bacteria"/>
</dbReference>
<dbReference type="HOGENOM" id="CLU_025113_0_2_9"/>
<dbReference type="UniPathway" id="UPA00031">
    <property type="reaction ID" value="UER00006"/>
</dbReference>
<dbReference type="Proteomes" id="UP000002156">
    <property type="component" value="Chromosome"/>
</dbReference>
<dbReference type="GO" id="GO:0005737">
    <property type="term" value="C:cytoplasm"/>
    <property type="evidence" value="ECO:0007669"/>
    <property type="project" value="UniProtKB-SubCell"/>
</dbReference>
<dbReference type="GO" id="GO:0140096">
    <property type="term" value="F:catalytic activity, acting on a protein"/>
    <property type="evidence" value="ECO:0007669"/>
    <property type="project" value="UniProtKB-ARBA"/>
</dbReference>
<dbReference type="GO" id="GO:0004821">
    <property type="term" value="F:histidine-tRNA ligase activity"/>
    <property type="evidence" value="ECO:0007669"/>
    <property type="project" value="TreeGrafter"/>
</dbReference>
<dbReference type="GO" id="GO:0016740">
    <property type="term" value="F:transferase activity"/>
    <property type="evidence" value="ECO:0007669"/>
    <property type="project" value="UniProtKB-ARBA"/>
</dbReference>
<dbReference type="GO" id="GO:0006427">
    <property type="term" value="P:histidyl-tRNA aminoacylation"/>
    <property type="evidence" value="ECO:0007669"/>
    <property type="project" value="TreeGrafter"/>
</dbReference>
<dbReference type="GO" id="GO:0000105">
    <property type="term" value="P:L-histidine biosynthetic process"/>
    <property type="evidence" value="ECO:0007669"/>
    <property type="project" value="UniProtKB-UniRule"/>
</dbReference>
<dbReference type="CDD" id="cd00773">
    <property type="entry name" value="HisRS-like_core"/>
    <property type="match status" value="1"/>
</dbReference>
<dbReference type="Gene3D" id="3.30.930.10">
    <property type="entry name" value="Bira Bifunctional Protein, Domain 2"/>
    <property type="match status" value="1"/>
</dbReference>
<dbReference type="HAMAP" id="MF_00125">
    <property type="entry name" value="HisZ"/>
    <property type="match status" value="1"/>
</dbReference>
<dbReference type="InterPro" id="IPR006195">
    <property type="entry name" value="aa-tRNA-synth_II"/>
</dbReference>
<dbReference type="InterPro" id="IPR045864">
    <property type="entry name" value="aa-tRNA-synth_II/BPL/LPL"/>
</dbReference>
<dbReference type="InterPro" id="IPR041715">
    <property type="entry name" value="HisRS-like_core"/>
</dbReference>
<dbReference type="InterPro" id="IPR004516">
    <property type="entry name" value="HisRS/HisZ"/>
</dbReference>
<dbReference type="InterPro" id="IPR004517">
    <property type="entry name" value="HisZ"/>
</dbReference>
<dbReference type="NCBIfam" id="TIGR00443">
    <property type="entry name" value="hisZ_biosyn_reg"/>
    <property type="match status" value="1"/>
</dbReference>
<dbReference type="PANTHER" id="PTHR43707:SF6">
    <property type="entry name" value="ATP PHOSPHORIBOSYLTRANSFERASE REGULATORY SUBUNIT"/>
    <property type="match status" value="1"/>
</dbReference>
<dbReference type="PANTHER" id="PTHR43707">
    <property type="entry name" value="HISTIDYL-TRNA SYNTHETASE"/>
    <property type="match status" value="1"/>
</dbReference>
<dbReference type="Pfam" id="PF13393">
    <property type="entry name" value="tRNA-synt_His"/>
    <property type="match status" value="1"/>
</dbReference>
<dbReference type="PIRSF" id="PIRSF001549">
    <property type="entry name" value="His-tRNA_synth"/>
    <property type="match status" value="1"/>
</dbReference>
<dbReference type="SUPFAM" id="SSF55681">
    <property type="entry name" value="Class II aaRS and biotin synthetases"/>
    <property type="match status" value="1"/>
</dbReference>
<dbReference type="PROSITE" id="PS50862">
    <property type="entry name" value="AA_TRNA_LIGASE_II"/>
    <property type="match status" value="1"/>
</dbReference>
<name>HISZ_THEP3</name>
<proteinExistence type="inferred from homology"/>
<evidence type="ECO:0000255" key="1">
    <source>
        <dbReference type="HAMAP-Rule" id="MF_00125"/>
    </source>
</evidence>
<accession>B0K732</accession>
<comment type="function">
    <text evidence="1">Required for the first step of histidine biosynthesis. May allow the feedback regulation of ATP phosphoribosyltransferase activity by histidine.</text>
</comment>
<comment type="pathway">
    <text evidence="1">Amino-acid biosynthesis; L-histidine biosynthesis; L-histidine from 5-phospho-alpha-D-ribose 1-diphosphate: step 1/9.</text>
</comment>
<comment type="subunit">
    <text evidence="1">Heteromultimer composed of HisG and HisZ subunits.</text>
</comment>
<comment type="subcellular location">
    <subcellularLocation>
        <location evidence="1">Cytoplasm</location>
    </subcellularLocation>
</comment>
<comment type="miscellaneous">
    <text>This function is generally fulfilled by the C-terminal part of HisG, which is missing in some bacteria such as this one.</text>
</comment>
<comment type="similarity">
    <text evidence="1">Belongs to the class-II aminoacyl-tRNA synthetase family. HisZ subfamily.</text>
</comment>
<reference key="1">
    <citation type="submission" date="2008-01" db="EMBL/GenBank/DDBJ databases">
        <title>Complete sequence of Thermoanaerobacter pseudethanolicus 39E.</title>
        <authorList>
            <person name="Copeland A."/>
            <person name="Lucas S."/>
            <person name="Lapidus A."/>
            <person name="Barry K."/>
            <person name="Glavina del Rio T."/>
            <person name="Dalin E."/>
            <person name="Tice H."/>
            <person name="Pitluck S."/>
            <person name="Bruce D."/>
            <person name="Goodwin L."/>
            <person name="Saunders E."/>
            <person name="Brettin T."/>
            <person name="Detter J.C."/>
            <person name="Han C."/>
            <person name="Schmutz J."/>
            <person name="Larimer F."/>
            <person name="Land M."/>
            <person name="Hauser L."/>
            <person name="Kyrpides N."/>
            <person name="Lykidis A."/>
            <person name="Hemme C."/>
            <person name="Fields M.W."/>
            <person name="He Z."/>
            <person name="Zhou J."/>
            <person name="Richardson P."/>
        </authorList>
    </citation>
    <scope>NUCLEOTIDE SEQUENCE [LARGE SCALE GENOMIC DNA]</scope>
    <source>
        <strain>ATCC 33223 / DSM 2355 / 39E</strain>
    </source>
</reference>
<gene>
    <name evidence="1" type="primary">hisZ</name>
    <name type="ordered locus">Teth39_0514</name>
</gene>
<organism>
    <name type="scientific">Thermoanaerobacter pseudethanolicus (strain ATCC 33223 / 39E)</name>
    <name type="common">Clostridium thermohydrosulfuricum</name>
    <dbReference type="NCBI Taxonomy" id="340099"/>
    <lineage>
        <taxon>Bacteria</taxon>
        <taxon>Bacillati</taxon>
        <taxon>Bacillota</taxon>
        <taxon>Clostridia</taxon>
        <taxon>Thermoanaerobacterales</taxon>
        <taxon>Thermoanaerobacteraceae</taxon>
        <taxon>Thermoanaerobacter</taxon>
    </lineage>
</organism>